<gene>
    <name type="primary">DNAL4</name>
</gene>
<sequence length="105" mass="12009">MGETEGKKDEADYKRLQTFPLVRHSDMPEEMRVETMELCVTACEKFSNNNESAAKMIKETMDKKFGSSWHVVIGEGFGFEITHEVKNLLYLYFGGTLAVCVWKCS</sequence>
<proteinExistence type="inferred from homology"/>
<dbReference type="EMBL" id="AM284969">
    <property type="protein sequence ID" value="CAK96013.1"/>
    <property type="molecule type" value="Genomic_DNA"/>
</dbReference>
<dbReference type="RefSeq" id="NP_001231596.1">
    <property type="nucleotide sequence ID" value="NM_001244667.1"/>
</dbReference>
<dbReference type="RefSeq" id="NP_001231597.1">
    <property type="nucleotide sequence ID" value="NM_001244668.1"/>
</dbReference>
<dbReference type="RefSeq" id="XP_020946727.1">
    <property type="nucleotide sequence ID" value="XM_021091068.1"/>
</dbReference>
<dbReference type="SMR" id="A4F4L4"/>
<dbReference type="FunCoup" id="A4F4L4">
    <property type="interactions" value="403"/>
</dbReference>
<dbReference type="STRING" id="9823.ENSSSCP00000042422"/>
<dbReference type="PaxDb" id="9823-ENSSSCP00000000097"/>
<dbReference type="Ensembl" id="ENSSSCT00000054888.3">
    <property type="protein sequence ID" value="ENSSSCP00000042422.3"/>
    <property type="gene ID" value="ENSSSCG00000000093.5"/>
</dbReference>
<dbReference type="Ensembl" id="ENSSSCT00070053242.1">
    <property type="protein sequence ID" value="ENSSSCP00070045109.1"/>
    <property type="gene ID" value="ENSSSCG00070026556.1"/>
</dbReference>
<dbReference type="Ensembl" id="ENSSSCT00070053274.1">
    <property type="protein sequence ID" value="ENSSSCP00070045137.1"/>
    <property type="gene ID" value="ENSSSCG00070026556.1"/>
</dbReference>
<dbReference type="Ensembl" id="ENSSSCT00085040081">
    <property type="protein sequence ID" value="ENSSSCP00085027933"/>
    <property type="gene ID" value="ENSSSCG00085021080"/>
</dbReference>
<dbReference type="Ensembl" id="ENSSSCT00090021386">
    <property type="protein sequence ID" value="ENSSSCP00090013185"/>
    <property type="gene ID" value="ENSSSCG00090012167"/>
</dbReference>
<dbReference type="Ensembl" id="ENSSSCT00105072829">
    <property type="protein sequence ID" value="ENSSSCP00105051725"/>
    <property type="gene ID" value="ENSSSCG00105038091"/>
</dbReference>
<dbReference type="Ensembl" id="ENSSSCT00110060638">
    <property type="protein sequence ID" value="ENSSSCP00110042404"/>
    <property type="gene ID" value="ENSSSCG00110031728"/>
</dbReference>
<dbReference type="Ensembl" id="ENSSSCT00115029697">
    <property type="protein sequence ID" value="ENSSSCP00115028201"/>
    <property type="gene ID" value="ENSSSCG00115016919"/>
</dbReference>
<dbReference type="Ensembl" id="ENSSSCT00130026041">
    <property type="protein sequence ID" value="ENSSSCP00130024681"/>
    <property type="gene ID" value="ENSSSCG00130013408"/>
</dbReference>
<dbReference type="GeneID" id="100520304"/>
<dbReference type="KEGG" id="ssc:100520304"/>
<dbReference type="CTD" id="10126"/>
<dbReference type="VGNC" id="VGNC:87374">
    <property type="gene designation" value="DNAL4"/>
</dbReference>
<dbReference type="eggNOG" id="KOG3430">
    <property type="taxonomic scope" value="Eukaryota"/>
</dbReference>
<dbReference type="GeneTree" id="ENSGT00940000161265"/>
<dbReference type="HOGENOM" id="CLU_070944_3_0_1"/>
<dbReference type="InParanoid" id="A4F4L4"/>
<dbReference type="OMA" id="CDMTDEM"/>
<dbReference type="OrthoDB" id="6506078at2759"/>
<dbReference type="TreeFam" id="TF324136"/>
<dbReference type="Reactome" id="R-SSC-177504">
    <property type="pathway name" value="Retrograde neurotrophin signalling"/>
</dbReference>
<dbReference type="Proteomes" id="UP000008227">
    <property type="component" value="Chromosome 5"/>
</dbReference>
<dbReference type="Proteomes" id="UP000314985">
    <property type="component" value="Chromosome 5"/>
</dbReference>
<dbReference type="Proteomes" id="UP000694570">
    <property type="component" value="Unplaced"/>
</dbReference>
<dbReference type="Proteomes" id="UP000694571">
    <property type="component" value="Unplaced"/>
</dbReference>
<dbReference type="Proteomes" id="UP000694720">
    <property type="component" value="Unplaced"/>
</dbReference>
<dbReference type="Proteomes" id="UP000694722">
    <property type="component" value="Unplaced"/>
</dbReference>
<dbReference type="Proteomes" id="UP000694723">
    <property type="component" value="Unplaced"/>
</dbReference>
<dbReference type="Proteomes" id="UP000694724">
    <property type="component" value="Unplaced"/>
</dbReference>
<dbReference type="Proteomes" id="UP000694725">
    <property type="component" value="Unplaced"/>
</dbReference>
<dbReference type="Proteomes" id="UP000694726">
    <property type="component" value="Unplaced"/>
</dbReference>
<dbReference type="Proteomes" id="UP000694727">
    <property type="component" value="Unplaced"/>
</dbReference>
<dbReference type="Proteomes" id="UP000694728">
    <property type="component" value="Unplaced"/>
</dbReference>
<dbReference type="GO" id="GO:0005929">
    <property type="term" value="C:cilium"/>
    <property type="evidence" value="ECO:0007669"/>
    <property type="project" value="UniProtKB-KW"/>
</dbReference>
<dbReference type="GO" id="GO:0005737">
    <property type="term" value="C:cytoplasm"/>
    <property type="evidence" value="ECO:0007669"/>
    <property type="project" value="UniProtKB-KW"/>
</dbReference>
<dbReference type="GO" id="GO:0030286">
    <property type="term" value="C:dynein complex"/>
    <property type="evidence" value="ECO:0007669"/>
    <property type="project" value="UniProtKB-KW"/>
</dbReference>
<dbReference type="GO" id="GO:0005874">
    <property type="term" value="C:microtubule"/>
    <property type="evidence" value="ECO:0007669"/>
    <property type="project" value="UniProtKB-KW"/>
</dbReference>
<dbReference type="GO" id="GO:0042802">
    <property type="term" value="F:identical protein binding"/>
    <property type="evidence" value="ECO:0007669"/>
    <property type="project" value="Ensembl"/>
</dbReference>
<dbReference type="GO" id="GO:0007017">
    <property type="term" value="P:microtubule-based process"/>
    <property type="evidence" value="ECO:0007669"/>
    <property type="project" value="InterPro"/>
</dbReference>
<dbReference type="CDD" id="cd21453">
    <property type="entry name" value="DLC-like_DNAL4"/>
    <property type="match status" value="1"/>
</dbReference>
<dbReference type="FunFam" id="3.30.740.10:FF:000002">
    <property type="entry name" value="Dynein light chain"/>
    <property type="match status" value="1"/>
</dbReference>
<dbReference type="Gene3D" id="3.30.740.10">
    <property type="entry name" value="Protein Inhibitor Of Neuronal Nitric Oxide Synthase"/>
    <property type="match status" value="1"/>
</dbReference>
<dbReference type="InterPro" id="IPR037177">
    <property type="entry name" value="DLC_sf"/>
</dbReference>
<dbReference type="InterPro" id="IPR001372">
    <property type="entry name" value="Dynein_light_chain_typ-1/2"/>
</dbReference>
<dbReference type="PANTHER" id="PTHR11886:SF2">
    <property type="entry name" value="DYNEIN AXONEMAL LIGHT CHAIN 4"/>
    <property type="match status" value="1"/>
</dbReference>
<dbReference type="PANTHER" id="PTHR11886">
    <property type="entry name" value="DYNEIN LIGHT CHAIN"/>
    <property type="match status" value="1"/>
</dbReference>
<dbReference type="Pfam" id="PF01221">
    <property type="entry name" value="Dynein_light"/>
    <property type="match status" value="1"/>
</dbReference>
<dbReference type="SMART" id="SM01375">
    <property type="entry name" value="Dynein_light"/>
    <property type="match status" value="1"/>
</dbReference>
<dbReference type="SUPFAM" id="SSF54648">
    <property type="entry name" value="DLC"/>
    <property type="match status" value="1"/>
</dbReference>
<reference key="1">
    <citation type="submission" date="2006-06" db="EMBL/GenBank/DDBJ databases">
        <title>Molecular characterization of the porcine DNAL4 gene.</title>
        <authorList>
            <person name="Uhlmann B."/>
            <person name="Kuiper H."/>
            <person name="Distl O."/>
            <person name="Leeb T."/>
        </authorList>
    </citation>
    <scope>NUCLEOTIDE SEQUENCE [GENOMIC DNA]</scope>
</reference>
<evidence type="ECO:0000250" key="1"/>
<evidence type="ECO:0000305" key="2"/>
<comment type="function">
    <text evidence="1">Force generating protein of respiratory cilia. Produces force towards the minus ends of microtubules. Dynein has ATPase activity (By similarity).</text>
</comment>
<comment type="subunit">
    <text evidence="1">Consists of at least two heavy chains and a number of intermediate and light chains.</text>
</comment>
<comment type="subcellular location">
    <subcellularLocation>
        <location evidence="1">Cytoplasm</location>
        <location evidence="1">Cytoskeleton</location>
        <location evidence="1">Cilium axoneme</location>
    </subcellularLocation>
</comment>
<comment type="similarity">
    <text evidence="2">Belongs to the dynein light chain family.</text>
</comment>
<keyword id="KW-0966">Cell projection</keyword>
<keyword id="KW-0969">Cilium</keyword>
<keyword id="KW-0963">Cytoplasm</keyword>
<keyword id="KW-0206">Cytoskeleton</keyword>
<keyword id="KW-0243">Dynein</keyword>
<keyword id="KW-0493">Microtubule</keyword>
<keyword id="KW-0505">Motor protein</keyword>
<keyword id="KW-1185">Reference proteome</keyword>
<organism>
    <name type="scientific">Sus scrofa</name>
    <name type="common">Pig</name>
    <dbReference type="NCBI Taxonomy" id="9823"/>
    <lineage>
        <taxon>Eukaryota</taxon>
        <taxon>Metazoa</taxon>
        <taxon>Chordata</taxon>
        <taxon>Craniata</taxon>
        <taxon>Vertebrata</taxon>
        <taxon>Euteleostomi</taxon>
        <taxon>Mammalia</taxon>
        <taxon>Eutheria</taxon>
        <taxon>Laurasiatheria</taxon>
        <taxon>Artiodactyla</taxon>
        <taxon>Suina</taxon>
        <taxon>Suidae</taxon>
        <taxon>Sus</taxon>
    </lineage>
</organism>
<accession>A4F4L4</accession>
<protein>
    <recommendedName>
        <fullName>Dynein axonemal light chain 4</fullName>
    </recommendedName>
</protein>
<feature type="chain" id="PRO_0000285676" description="Dynein axonemal light chain 4">
    <location>
        <begin position="1"/>
        <end position="105"/>
    </location>
</feature>
<name>DNAL4_PIG</name>